<keyword id="KW-0687">Ribonucleoprotein</keyword>
<keyword id="KW-0689">Ribosomal protein</keyword>
<keyword id="KW-0694">RNA-binding</keyword>
<keyword id="KW-0699">rRNA-binding</keyword>
<organism>
    <name type="scientific">Bartonella tribocorum (strain CIP 105476 / IBS 506)</name>
    <dbReference type="NCBI Taxonomy" id="382640"/>
    <lineage>
        <taxon>Bacteria</taxon>
        <taxon>Pseudomonadati</taxon>
        <taxon>Pseudomonadota</taxon>
        <taxon>Alphaproteobacteria</taxon>
        <taxon>Hyphomicrobiales</taxon>
        <taxon>Bartonellaceae</taxon>
        <taxon>Bartonella</taxon>
    </lineage>
</organism>
<evidence type="ECO:0000255" key="1">
    <source>
        <dbReference type="HAMAP-Rule" id="MF_00382"/>
    </source>
</evidence>
<evidence type="ECO:0000305" key="2"/>
<proteinExistence type="inferred from homology"/>
<accession>A9ILQ7</accession>
<sequence length="133" mass="14973">MARVKRGVTAHAKHKKVLKQAEGFYGRRKNTIRAAKAAVDRSKQYAYRDRKNRKRTFRALWIQRINAAVRAEGLTYGRFIDGLSKAGIEVDRKVLSDIAIYEAEAFSALVASAKKALEYLKDTTPNAFEGAVK</sequence>
<comment type="function">
    <text evidence="1">Binds directly to 23S ribosomal RNA and is necessary for the in vitro assembly process of the 50S ribosomal subunit. It is not involved in the protein synthesizing functions of that subunit.</text>
</comment>
<comment type="similarity">
    <text evidence="1">Belongs to the bacterial ribosomal protein bL20 family.</text>
</comment>
<protein>
    <recommendedName>
        <fullName evidence="1">Large ribosomal subunit protein bL20</fullName>
    </recommendedName>
    <alternativeName>
        <fullName evidence="2">50S ribosomal protein L20</fullName>
    </alternativeName>
</protein>
<name>RL20_BART1</name>
<reference key="1">
    <citation type="journal article" date="2007" name="Nat. Genet.">
        <title>Genomic analysis of Bartonella identifies type IV secretion systems as host adaptability factors.</title>
        <authorList>
            <person name="Saenz H.L."/>
            <person name="Engel P."/>
            <person name="Stoeckli M.C."/>
            <person name="Lanz C."/>
            <person name="Raddatz G."/>
            <person name="Vayssier-Taussat M."/>
            <person name="Birtles R."/>
            <person name="Schuster S.C."/>
            <person name="Dehio C."/>
        </authorList>
    </citation>
    <scope>NUCLEOTIDE SEQUENCE [LARGE SCALE GENOMIC DNA]</scope>
    <source>
        <strain>CIP 105476 / IBS 506</strain>
    </source>
</reference>
<dbReference type="EMBL" id="AM260525">
    <property type="protein sequence ID" value="CAK00591.1"/>
    <property type="molecule type" value="Genomic_DNA"/>
</dbReference>
<dbReference type="RefSeq" id="WP_012230420.1">
    <property type="nucleotide sequence ID" value="NC_010161.1"/>
</dbReference>
<dbReference type="SMR" id="A9ILQ7"/>
<dbReference type="KEGG" id="btr:BT_0098"/>
<dbReference type="eggNOG" id="COG0292">
    <property type="taxonomic scope" value="Bacteria"/>
</dbReference>
<dbReference type="HOGENOM" id="CLU_123265_0_1_5"/>
<dbReference type="Proteomes" id="UP000001592">
    <property type="component" value="Chromosome"/>
</dbReference>
<dbReference type="GO" id="GO:1990904">
    <property type="term" value="C:ribonucleoprotein complex"/>
    <property type="evidence" value="ECO:0007669"/>
    <property type="project" value="UniProtKB-KW"/>
</dbReference>
<dbReference type="GO" id="GO:0005840">
    <property type="term" value="C:ribosome"/>
    <property type="evidence" value="ECO:0007669"/>
    <property type="project" value="UniProtKB-KW"/>
</dbReference>
<dbReference type="GO" id="GO:0019843">
    <property type="term" value="F:rRNA binding"/>
    <property type="evidence" value="ECO:0007669"/>
    <property type="project" value="UniProtKB-UniRule"/>
</dbReference>
<dbReference type="GO" id="GO:0003735">
    <property type="term" value="F:structural constituent of ribosome"/>
    <property type="evidence" value="ECO:0007669"/>
    <property type="project" value="InterPro"/>
</dbReference>
<dbReference type="GO" id="GO:0000027">
    <property type="term" value="P:ribosomal large subunit assembly"/>
    <property type="evidence" value="ECO:0007669"/>
    <property type="project" value="UniProtKB-UniRule"/>
</dbReference>
<dbReference type="GO" id="GO:0006412">
    <property type="term" value="P:translation"/>
    <property type="evidence" value="ECO:0007669"/>
    <property type="project" value="InterPro"/>
</dbReference>
<dbReference type="CDD" id="cd07026">
    <property type="entry name" value="Ribosomal_L20"/>
    <property type="match status" value="1"/>
</dbReference>
<dbReference type="FunFam" id="1.10.1900.20:FF:000001">
    <property type="entry name" value="50S ribosomal protein L20"/>
    <property type="match status" value="1"/>
</dbReference>
<dbReference type="Gene3D" id="6.10.160.10">
    <property type="match status" value="1"/>
</dbReference>
<dbReference type="Gene3D" id="1.10.1900.20">
    <property type="entry name" value="Ribosomal protein L20"/>
    <property type="match status" value="1"/>
</dbReference>
<dbReference type="HAMAP" id="MF_00382">
    <property type="entry name" value="Ribosomal_bL20"/>
    <property type="match status" value="1"/>
</dbReference>
<dbReference type="InterPro" id="IPR005813">
    <property type="entry name" value="Ribosomal_bL20"/>
</dbReference>
<dbReference type="InterPro" id="IPR049946">
    <property type="entry name" value="RIBOSOMAL_L20_CS"/>
</dbReference>
<dbReference type="InterPro" id="IPR035566">
    <property type="entry name" value="Ribosomal_protein_bL20_C"/>
</dbReference>
<dbReference type="NCBIfam" id="TIGR01032">
    <property type="entry name" value="rplT_bact"/>
    <property type="match status" value="1"/>
</dbReference>
<dbReference type="PANTHER" id="PTHR10986">
    <property type="entry name" value="39S RIBOSOMAL PROTEIN L20"/>
    <property type="match status" value="1"/>
</dbReference>
<dbReference type="Pfam" id="PF00453">
    <property type="entry name" value="Ribosomal_L20"/>
    <property type="match status" value="1"/>
</dbReference>
<dbReference type="PRINTS" id="PR00062">
    <property type="entry name" value="RIBOSOMALL20"/>
</dbReference>
<dbReference type="SUPFAM" id="SSF74731">
    <property type="entry name" value="Ribosomal protein L20"/>
    <property type="match status" value="1"/>
</dbReference>
<dbReference type="PROSITE" id="PS00937">
    <property type="entry name" value="RIBOSOMAL_L20"/>
    <property type="match status" value="1"/>
</dbReference>
<gene>
    <name evidence="1" type="primary">rplT</name>
    <name type="ordered locus">BT_0098</name>
</gene>
<feature type="chain" id="PRO_1000080058" description="Large ribosomal subunit protein bL20">
    <location>
        <begin position="1"/>
        <end position="133"/>
    </location>
</feature>